<name>FIBA_BOVIN</name>
<accession>P02672</accession>
<accession>O97642</accession>
<accession>Q3T049</accession>
<comment type="function">
    <text evidence="2">Cleaved by the protease thrombin to yield monomers which, together with fibrinogen beta (FGB) and fibrinogen gamma (FGG), polymerize to form an insoluble fibrin matrix. Fibrin has a major function in hemostasis as one of the primary components of blood clots. In addition, functions during the early stages of wound repair to stabilize the lesion and guide cell migration during re-epithelialization. Was originally thought to be essential for platelet aggregation, based on in vitro studies using anticoagulated blood. However, subsequent studies have shown that it is not absolutely required for thrombus formation in vivo. Enhances expression of SELP in activated platelets via an ITGB3-dependent pathway. Maternal fibrinogen is essential for successful pregnancy. Fibrin deposition is also associated with infection, where it protects against IFNG-mediated hemorrhage. May also facilitate the immune response via both innate and T-cell mediated pathways.</text>
</comment>
<comment type="subunit">
    <text evidence="6">Heterohexamer; disulfide linked. Contains 2 sets of 3 non-identical chains (alpha, beta and gamma). The 2 heterotrimers are in head to head conformation with the N-termini in a small central domain.</text>
</comment>
<comment type="subcellular location">
    <subcellularLocation>
        <location evidence="12">Secreted</location>
    </subcellularLocation>
</comment>
<comment type="domain">
    <text evidence="6">A long coiled coil structure formed by 3 polypeptide chains connects the central nodule to the C-terminal domains (distal nodules). The long C-terminal ends of the alpha chains fold back, contributing a fourth strand to the coiled coil structure.</text>
</comment>
<comment type="PTM">
    <text>Conversion of fibrinogen to fibrin is triggered by thrombin, which cleaves fibrinopeptides A and B from alpha and beta chains, and thus exposes the N-terminal polymerization sites responsible for the formation of the soft clot. The soft clot is converted into the hard clot by factor XIIIA which catalyzes the epsilon-(gamma-glutamyl)lysine cross-linking between gamma chains (stronger) and between alpha chains (weaker) of different monomers.</text>
</comment>
<comment type="PTM">
    <text>Forms F13A-mediated cross-links between a glutamine and the epsilon-amino group of a lysine residue, forming fibronectin-fibrinogen heteropolymers.</text>
</comment>
<feature type="signal peptide" evidence="7 10">
    <location>
        <begin position="1"/>
        <end position="19"/>
    </location>
</feature>
<feature type="peptide" id="PRO_0000009005" description="Fibrinopeptide A" evidence="9 11">
    <location>
        <begin position="20"/>
        <end position="38"/>
    </location>
</feature>
<feature type="chain" id="PRO_0000009006" description="Fibrinogen alpha chain">
    <location>
        <begin position="39"/>
        <end position="615"/>
    </location>
</feature>
<feature type="region of interest" description="Disordered" evidence="5">
    <location>
        <begin position="267"/>
        <end position="427"/>
    </location>
</feature>
<feature type="region of interest" description="Disordered" evidence="5">
    <location>
        <begin position="530"/>
        <end position="615"/>
    </location>
</feature>
<feature type="coiled-coil region" evidence="13">
    <location>
        <begin position="71"/>
        <end position="602"/>
    </location>
</feature>
<feature type="compositionally biased region" description="Polar residues" evidence="5">
    <location>
        <begin position="293"/>
        <end position="302"/>
    </location>
</feature>
<feature type="compositionally biased region" description="Low complexity" evidence="5">
    <location>
        <begin position="373"/>
        <end position="396"/>
    </location>
</feature>
<feature type="compositionally biased region" description="Low complexity" evidence="5">
    <location>
        <begin position="537"/>
        <end position="549"/>
    </location>
</feature>
<feature type="compositionally biased region" description="Polar residues" evidence="5">
    <location>
        <begin position="550"/>
        <end position="560"/>
    </location>
</feature>
<feature type="compositionally biased region" description="Basic residues" evidence="5">
    <location>
        <begin position="591"/>
        <end position="601"/>
    </location>
</feature>
<feature type="site" description="Cleavage; by thrombin; to release fibrinopeptide A">
    <location>
        <begin position="38"/>
        <end position="39"/>
    </location>
</feature>
<feature type="glycosylation site" description="O-linked (GalNAc...) threonine" evidence="1">
    <location>
        <position position="325"/>
    </location>
</feature>
<feature type="disulfide bond" description="Interchain" evidence="3">
    <location>
        <position position="50"/>
    </location>
</feature>
<feature type="disulfide bond" description="Interchain (with C-72 in beta chain)" evidence="4">
    <location>
        <position position="58"/>
    </location>
</feature>
<feature type="disulfide bond" description="Interchain (with C-47 in gamma chain)" evidence="4">
    <location>
        <position position="67"/>
    </location>
</feature>
<feature type="disulfide bond" description="Interchain (with C-83 in beta chain)" evidence="4">
    <location>
        <position position="71"/>
    </location>
</feature>
<feature type="disulfide bond" description="Interchain (with C-163 in gamma chain)" evidence="4">
    <location>
        <position position="183"/>
    </location>
</feature>
<feature type="disulfide bond" description="Interchain (with C-200 in beta chain)" evidence="4">
    <location>
        <position position="187"/>
    </location>
</feature>
<feature type="disulfide bond" evidence="8 14 15">
    <location>
        <begin position="455"/>
        <end position="485"/>
    </location>
</feature>
<feature type="sequence conflict" description="In Ref. 2; AAC67562." evidence="12" ref="2">
    <original>R</original>
    <variation>K</variation>
    <location>
        <position position="189"/>
    </location>
</feature>
<feature type="sequence conflict" description="In Ref. 2; AAC67562." evidence="12" ref="2">
    <original>RE</original>
    <variation>KK</variation>
    <location>
        <begin position="238"/>
        <end position="239"/>
    </location>
</feature>
<feature type="sequence conflict" description="In Ref. 2; AAC67562." evidence="12" ref="2">
    <location>
        <begin position="360"/>
        <end position="372"/>
    </location>
</feature>
<feature type="sequence conflict" description="In Ref. 2; AAC67562." evidence="12" ref="2">
    <original>A</original>
    <variation>G</variation>
    <location>
        <position position="375"/>
    </location>
</feature>
<feature type="sequence conflict" description="In Ref. 3; no nucleotide entry." evidence="12" ref="3">
    <original>KV</original>
    <variation>S</variation>
    <location>
        <begin position="457"/>
        <end position="458"/>
    </location>
</feature>
<feature type="sequence conflict" description="In Ref. 3; no nucleotide entry." evidence="12" ref="3">
    <original>S</original>
    <variation>T</variation>
    <location>
        <position position="612"/>
    </location>
</feature>
<feature type="helix" evidence="16">
    <location>
        <begin position="60"/>
        <end position="62"/>
    </location>
</feature>
<feature type="strand" evidence="16">
    <location>
        <begin position="66"/>
        <end position="68"/>
    </location>
</feature>
<feature type="helix" evidence="16">
    <location>
        <begin position="70"/>
        <end position="95"/>
    </location>
</feature>
<feature type="strand" evidence="17">
    <location>
        <begin position="417"/>
        <end position="419"/>
    </location>
</feature>
<feature type="strand" evidence="17">
    <location>
        <begin position="421"/>
        <end position="423"/>
    </location>
</feature>
<feature type="strand" evidence="17">
    <location>
        <begin position="443"/>
        <end position="445"/>
    </location>
</feature>
<feature type="strand" evidence="17">
    <location>
        <begin position="450"/>
        <end position="453"/>
    </location>
</feature>
<feature type="turn" evidence="17">
    <location>
        <begin position="454"/>
        <end position="456"/>
    </location>
</feature>
<feature type="strand" evidence="17">
    <location>
        <begin position="457"/>
        <end position="459"/>
    </location>
</feature>
<feature type="turn" evidence="18">
    <location>
        <begin position="466"/>
        <end position="468"/>
    </location>
</feature>
<feature type="strand" evidence="17">
    <location>
        <begin position="475"/>
        <end position="477"/>
    </location>
</feature>
<feature type="strand" evidence="18">
    <location>
        <begin position="480"/>
        <end position="482"/>
    </location>
</feature>
<feature type="strand" evidence="17">
    <location>
        <begin position="483"/>
        <end position="486"/>
    </location>
</feature>
<feature type="strand" evidence="18">
    <location>
        <begin position="497"/>
        <end position="500"/>
    </location>
</feature>
<feature type="strand" evidence="17">
    <location>
        <begin position="505"/>
        <end position="507"/>
    </location>
</feature>
<feature type="turn" evidence="17">
    <location>
        <begin position="537"/>
        <end position="539"/>
    </location>
</feature>
<feature type="turn" evidence="17">
    <location>
        <begin position="555"/>
        <end position="558"/>
    </location>
</feature>
<evidence type="ECO:0000250" key="1"/>
<evidence type="ECO:0000250" key="2">
    <source>
        <dbReference type="UniProtKB" id="E9PV24"/>
    </source>
</evidence>
<evidence type="ECO:0000250" key="3">
    <source>
        <dbReference type="UniProtKB" id="P02671"/>
    </source>
</evidence>
<evidence type="ECO:0000250" key="4">
    <source>
        <dbReference type="UniProtKB" id="P14448"/>
    </source>
</evidence>
<evidence type="ECO:0000256" key="5">
    <source>
        <dbReference type="SAM" id="MobiDB-lite"/>
    </source>
</evidence>
<evidence type="ECO:0000269" key="6">
    <source>
    </source>
</evidence>
<evidence type="ECO:0000269" key="7">
    <source>
    </source>
</evidence>
<evidence type="ECO:0000269" key="8">
    <source>
    </source>
</evidence>
<evidence type="ECO:0000269" key="9">
    <source>
    </source>
</evidence>
<evidence type="ECO:0000269" key="10">
    <source ref="4"/>
</evidence>
<evidence type="ECO:0000269" key="11">
    <source ref="7"/>
</evidence>
<evidence type="ECO:0000305" key="12"/>
<evidence type="ECO:0000305" key="13">
    <source>
    </source>
</evidence>
<evidence type="ECO:0007744" key="14">
    <source>
        <dbReference type="PDB" id="2BAF"/>
    </source>
</evidence>
<evidence type="ECO:0007744" key="15">
    <source>
        <dbReference type="PDB" id="2JOR"/>
    </source>
</evidence>
<evidence type="ECO:0007829" key="16">
    <source>
        <dbReference type="PDB" id="1JY2"/>
    </source>
</evidence>
<evidence type="ECO:0007829" key="17">
    <source>
        <dbReference type="PDB" id="2BAF"/>
    </source>
</evidence>
<evidence type="ECO:0007829" key="18">
    <source>
        <dbReference type="PDB" id="2JOR"/>
    </source>
</evidence>
<proteinExistence type="evidence at protein level"/>
<dbReference type="EMBL" id="BC102564">
    <property type="protein sequence ID" value="AAI02565.1"/>
    <property type="molecule type" value="mRNA"/>
</dbReference>
<dbReference type="EMBL" id="AF095463">
    <property type="protein sequence ID" value="AAC67562.1"/>
    <property type="molecule type" value="Genomic_DNA"/>
</dbReference>
<dbReference type="PIR" id="A05294">
    <property type="entry name" value="A05294"/>
</dbReference>
<dbReference type="PIR" id="S69114">
    <property type="entry name" value="S69114"/>
</dbReference>
<dbReference type="RefSeq" id="NP_001028798.1">
    <property type="nucleotide sequence ID" value="NM_001033626.1"/>
</dbReference>
<dbReference type="PDB" id="1DEQ">
    <property type="method" value="X-ray"/>
    <property type="resolution" value="3.50 A"/>
    <property type="chains" value="A/D/N/Q=20-409"/>
</dbReference>
<dbReference type="PDB" id="1JY2">
    <property type="method" value="X-ray"/>
    <property type="resolution" value="1.40 A"/>
    <property type="chains" value="N/Q=48-100"/>
</dbReference>
<dbReference type="PDB" id="1JY3">
    <property type="method" value="X-ray"/>
    <property type="resolution" value="1.60 A"/>
    <property type="chains" value="N/Q=48-100"/>
</dbReference>
<dbReference type="PDB" id="2BAF">
    <property type="method" value="NMR"/>
    <property type="chains" value="A=406-570"/>
</dbReference>
<dbReference type="PDB" id="2JOR">
    <property type="method" value="NMR"/>
    <property type="chains" value="A=438-515"/>
</dbReference>
<dbReference type="PDBsum" id="1DEQ"/>
<dbReference type="PDBsum" id="1JY2"/>
<dbReference type="PDBsum" id="1JY3"/>
<dbReference type="PDBsum" id="2BAF"/>
<dbReference type="PDBsum" id="2JOR"/>
<dbReference type="BMRB" id="P02672"/>
<dbReference type="SMR" id="P02672"/>
<dbReference type="FunCoup" id="P02672">
    <property type="interactions" value="135"/>
</dbReference>
<dbReference type="STRING" id="9913.ENSBTAP00000002145"/>
<dbReference type="Allergome" id="1112">
    <property type="allergen name" value="Bos d Fibrin"/>
</dbReference>
<dbReference type="GlyCosmos" id="P02672">
    <property type="glycosylation" value="1 site, No reported glycans"/>
</dbReference>
<dbReference type="GlyGen" id="P02672">
    <property type="glycosylation" value="1 site"/>
</dbReference>
<dbReference type="PaxDb" id="9913-ENSBTAP00000002145"/>
<dbReference type="PeptideAtlas" id="P02672"/>
<dbReference type="GeneID" id="522039"/>
<dbReference type="KEGG" id="bta:522039"/>
<dbReference type="CTD" id="2243"/>
<dbReference type="eggNOG" id="KOG2579">
    <property type="taxonomic scope" value="Eukaryota"/>
</dbReference>
<dbReference type="InParanoid" id="P02672"/>
<dbReference type="OrthoDB" id="9945370at2759"/>
<dbReference type="EvolutionaryTrace" id="P02672"/>
<dbReference type="Proteomes" id="UP000009136">
    <property type="component" value="Unplaced"/>
</dbReference>
<dbReference type="GO" id="GO:0005577">
    <property type="term" value="C:fibrinogen complex"/>
    <property type="evidence" value="ECO:0000318"/>
    <property type="project" value="GO_Central"/>
</dbReference>
<dbReference type="GO" id="GO:0030674">
    <property type="term" value="F:protein-macromolecule adaptor activity"/>
    <property type="evidence" value="ECO:0000318"/>
    <property type="project" value="GO_Central"/>
</dbReference>
<dbReference type="GO" id="GO:0005102">
    <property type="term" value="F:signaling receptor binding"/>
    <property type="evidence" value="ECO:0007669"/>
    <property type="project" value="InterPro"/>
</dbReference>
<dbReference type="GO" id="GO:0002250">
    <property type="term" value="P:adaptive immune response"/>
    <property type="evidence" value="ECO:0007669"/>
    <property type="project" value="UniProtKB-KW"/>
</dbReference>
<dbReference type="GO" id="GO:0072377">
    <property type="term" value="P:blood coagulation, common pathway"/>
    <property type="evidence" value="ECO:0000318"/>
    <property type="project" value="GO_Central"/>
</dbReference>
<dbReference type="GO" id="GO:0042730">
    <property type="term" value="P:fibrinolysis"/>
    <property type="evidence" value="ECO:0000318"/>
    <property type="project" value="GO_Central"/>
</dbReference>
<dbReference type="GO" id="GO:0045087">
    <property type="term" value="P:innate immune response"/>
    <property type="evidence" value="ECO:0007669"/>
    <property type="project" value="UniProtKB-KW"/>
</dbReference>
<dbReference type="GO" id="GO:0070527">
    <property type="term" value="P:platelet aggregation"/>
    <property type="evidence" value="ECO:0000318"/>
    <property type="project" value="GO_Central"/>
</dbReference>
<dbReference type="GO" id="GO:0034116">
    <property type="term" value="P:positive regulation of heterotypic cell-cell adhesion"/>
    <property type="evidence" value="ECO:0000318"/>
    <property type="project" value="GO_Central"/>
</dbReference>
<dbReference type="GO" id="GO:0051258">
    <property type="term" value="P:protein polymerization"/>
    <property type="evidence" value="ECO:0007669"/>
    <property type="project" value="InterPro"/>
</dbReference>
<dbReference type="FunFam" id="1.20.5.50:FF:000006">
    <property type="entry name" value="Fibrinogen alpha chain"/>
    <property type="match status" value="1"/>
</dbReference>
<dbReference type="Gene3D" id="1.20.5.50">
    <property type="match status" value="1"/>
</dbReference>
<dbReference type="InterPro" id="IPR037579">
    <property type="entry name" value="FIB_ANG-like"/>
</dbReference>
<dbReference type="InterPro" id="IPR012290">
    <property type="entry name" value="Fibrinogen_a/b/g_coil_dom"/>
</dbReference>
<dbReference type="InterPro" id="IPR021996">
    <property type="entry name" value="Fibrinogen_aC"/>
</dbReference>
<dbReference type="PANTHER" id="PTHR47221">
    <property type="entry name" value="FIBRINOGEN ALPHA CHAIN"/>
    <property type="match status" value="1"/>
</dbReference>
<dbReference type="PANTHER" id="PTHR47221:SF3">
    <property type="entry name" value="FIBRINOGEN ALPHA CHAIN"/>
    <property type="match status" value="1"/>
</dbReference>
<dbReference type="Pfam" id="PF08702">
    <property type="entry name" value="Fib_alpha"/>
    <property type="match status" value="1"/>
</dbReference>
<dbReference type="Pfam" id="PF12160">
    <property type="entry name" value="Fibrinogen_aC"/>
    <property type="match status" value="1"/>
</dbReference>
<dbReference type="SMART" id="SM01212">
    <property type="entry name" value="Fib_alpha"/>
    <property type="match status" value="1"/>
</dbReference>
<dbReference type="SUPFAM" id="SSF58010">
    <property type="entry name" value="Fibrinogen coiled-coil and central regions"/>
    <property type="match status" value="1"/>
</dbReference>
<reference key="1">
    <citation type="submission" date="2005-08" db="EMBL/GenBank/DDBJ databases">
        <authorList>
            <consortium name="NIH - Mammalian Gene Collection (MGC) project"/>
        </authorList>
    </citation>
    <scope>NUCLEOTIDE SEQUENCE [LARGE SCALE MRNA]</scope>
    <source>
        <strain>Hereford</strain>
        <tissue>Testis</tissue>
    </source>
</reference>
<reference key="2">
    <citation type="submission" date="1998-09" db="EMBL/GenBank/DDBJ databases">
        <authorList>
            <person name="Murakawa M."/>
        </authorList>
    </citation>
    <scope>NUCLEOTIDE SEQUENCE [GENOMIC DNA] OF 174-577</scope>
</reference>
<reference key="3">
    <citation type="book" date="1982" name="Proteins in biology and medicine">
        <title>The biosynthesis of fibrinogen and the cloning of its cDNA.</title>
        <editorList>
            <person name="Bradshaw R.A."/>
        </editorList>
        <authorList>
            <person name="Chung D.W."/>
            <person name="Rixon M.W."/>
            <person name="Davie E.W."/>
        </authorList>
    </citation>
    <scope>NUCLEOTIDE SEQUENCE [GENOMIC DNA] OF 412-615</scope>
</reference>
<reference key="4">
    <citation type="journal article" date="1960" name="Ark. Kemi">
        <title>Amino acid sequence of bovine fibrinopeptides.</title>
        <authorList>
            <person name="Sjoquist J."/>
            <person name="Blombaeck B."/>
            <person name="Wallen P."/>
        </authorList>
    </citation>
    <scope>PROTEIN SEQUENCE OF 20-38</scope>
</reference>
<reference key="5">
    <citation type="journal article" date="1959" name="J. Biol. Chem.">
        <title>Thrombin-induced formation of co-fibrin. III. Acid degradation studies and summary of sequential evidence on peptide A.</title>
        <authorList>
            <person name="Folk J.E."/>
            <person name="Gladner J.A."/>
            <person name="Levin Y."/>
        </authorList>
    </citation>
    <scope>PROTEIN SEQUENCE OF 20-38</scope>
</reference>
<reference key="6">
    <citation type="journal article" date="1977" name="Biochim. Biophys. Acta">
        <title>Disulfide-linked cyanogen bromide peptides of bovine fibrinogen. II. Isolation and sequence analysis of the chain constituents from the amino terminal region.</title>
        <authorList>
            <person name="Timpl R."/>
            <person name="Fietzek P.P."/>
            <person name="Wachter E."/>
            <person name="van Delden V."/>
        </authorList>
    </citation>
    <scope>PROTEIN SEQUENCE OF 39-73</scope>
</reference>
<reference key="7">
    <citation type="book" date="1980" name="Protides of the biological fluids, Proc. 28th colloquium">
        <editorList>
            <person name="Peeters H."/>
        </editorList>
        <authorList>
            <person name="Henschen A."/>
            <person name="Lottspeich F."/>
            <person name="Topfer-Petersen E."/>
            <person name="Kehl M."/>
            <person name="Timpl R."/>
        </authorList>
    </citation>
    <scope>PROTEIN SEQUENCE OF 39-68; 262-287 AND 572-599</scope>
</reference>
<reference key="8">
    <citation type="journal article" date="1979" name="Arch. Biochem. Biophys.">
        <title>Amino acid sequences of portions of the alpha and beta chains of bovine fibrinogen.</title>
        <authorList>
            <person name="Martinelli R.A."/>
            <person name="Inglis A.S."/>
            <person name="Rubira M.R."/>
            <person name="Hageman T.C."/>
            <person name="Hurrell J.G.R."/>
            <person name="Leach S.J."/>
            <person name="Scheraga H.A."/>
        </authorList>
    </citation>
    <scope>PROTEIN SEQUENCE OF 42-71</scope>
</reference>
<reference key="9">
    <citation type="journal article" date="2000" name="Proc. Natl. Acad. Sci. U.S.A.">
        <title>The crystal structure of modified bovine fibrinogen.</title>
        <authorList>
            <person name="Brown J.H."/>
            <person name="Volkmann N."/>
            <person name="Jun G."/>
            <person name="Henschen-Edman A.H."/>
            <person name="Cohen C."/>
        </authorList>
    </citation>
    <scope>X-RAY CRYSTALLOGRAPHY (3.50 ANGSTROMS) OF 20-409</scope>
    <scope>SUBUNIT</scope>
    <scope>COILED COIL DOMAIN</scope>
</reference>
<reference evidence="15" key="10">
    <citation type="journal article" date="2007" name="Biochemistry">
        <title>NMR solution structure, stability, and interaction of the recombinant bovine fibrinogen alphaC-domain fragment.</title>
        <authorList>
            <person name="Burton R.A."/>
            <person name="Tsurupa G."/>
            <person name="Hantgan R.R."/>
            <person name="Tjandra N."/>
            <person name="Medved L."/>
        </authorList>
    </citation>
    <scope>STRUCTURE BY NMR OF 438-515</scope>
    <scope>DISULFIDE BONDS</scope>
</reference>
<protein>
    <recommendedName>
        <fullName>Fibrinogen alpha chain</fullName>
    </recommendedName>
    <component>
        <recommendedName>
            <fullName>Fibrinopeptide A</fullName>
        </recommendedName>
    </component>
    <component>
        <recommendedName>
            <fullName>Fibrinogen alpha chain</fullName>
        </recommendedName>
    </component>
</protein>
<organism>
    <name type="scientific">Bos taurus</name>
    <name type="common">Bovine</name>
    <dbReference type="NCBI Taxonomy" id="9913"/>
    <lineage>
        <taxon>Eukaryota</taxon>
        <taxon>Metazoa</taxon>
        <taxon>Chordata</taxon>
        <taxon>Craniata</taxon>
        <taxon>Vertebrata</taxon>
        <taxon>Euteleostomi</taxon>
        <taxon>Mammalia</taxon>
        <taxon>Eutheria</taxon>
        <taxon>Laurasiatheria</taxon>
        <taxon>Artiodactyla</taxon>
        <taxon>Ruminantia</taxon>
        <taxon>Pecora</taxon>
        <taxon>Bovidae</taxon>
        <taxon>Bovinae</taxon>
        <taxon>Bos</taxon>
    </lineage>
</organism>
<keyword id="KW-0002">3D-structure</keyword>
<keyword id="KW-1064">Adaptive immunity</keyword>
<keyword id="KW-0094">Blood coagulation</keyword>
<keyword id="KW-0175">Coiled coil</keyword>
<keyword id="KW-0903">Direct protein sequencing</keyword>
<keyword id="KW-1015">Disulfide bond</keyword>
<keyword id="KW-0325">Glycoprotein</keyword>
<keyword id="KW-0356">Hemostasis</keyword>
<keyword id="KW-0391">Immunity</keyword>
<keyword id="KW-0399">Innate immunity</keyword>
<keyword id="KW-1185">Reference proteome</keyword>
<keyword id="KW-0964">Secreted</keyword>
<keyword id="KW-0732">Signal</keyword>
<gene>
    <name type="primary">FGA</name>
</gene>
<sequence>MFSVRDLCLVLSLVGAIKTEDGSDPPSGDFLTEGGGVRGPRLVERQQSACKETGWPFCSDEDWNTKCPSGCRMKGLIDEVDQDFTSRINKLRDSLFNYQKNSKDSNTLTKNIVELMRGDFAKANNNDNTFKQISEDLRSRIEILRRKVIEQVQRIKVLQKNVRDQLVDMKRLEVDIDIKIRSCKGSCSRALEHKVDLEDYKNQQKQLEQVIAINLLPSRDIQYLPLIKMSTITGPVPREFKSQLQEAPLEWKALLEMQQTKMVLETFGGDGHARGDSVSQGTGLAPGSPRKPGTSSIGNVNPGSYGPGSSGTWNPGRPEPGSAGTWNPGRPEPGSAGTWNPGRPEPGSAGTWNPGRPEPGSAGTWNPGRPEPGSAGTWNTGSSGSSSFRPDSSGHGNIRPSSPDWGTFREEGSVSSGTKQEFHTGKLVTTKGDKELLIDNEKVTSGHTTTTRRSCSKVITKTVTNADGRTETTKEVVKSEDGSDCGDADFDWHHTFPSRGNLDDFFHRDKDDFFTRSSHEFDGRTGLAPEFAALGESGSSSSKTSTHSKQFVSSSTTVNRGGSAIESKHFKMEDEAESLEDLGFKGAHGTQKGHTKARPARGIHTSPLGEPSLTP</sequence>